<sequence>MYDNLKSLGITNPEEIDRYSLRQEANNDILKIYFQKDKGEFFAKSVKFKYPRQRKTVVADGVGQGYKEVQEISPNLRYIIDELDQICQRDRSEVDLKRKILDDLRHLESVVTNKISEIEADLEKLTRK</sequence>
<organism>
    <name type="scientific">Shigella boydii serotype 4 (strain Sb227)</name>
    <dbReference type="NCBI Taxonomy" id="300268"/>
    <lineage>
        <taxon>Bacteria</taxon>
        <taxon>Pseudomonadati</taxon>
        <taxon>Pseudomonadota</taxon>
        <taxon>Gammaproteobacteria</taxon>
        <taxon>Enterobacterales</taxon>
        <taxon>Enterobacteriaceae</taxon>
        <taxon>Shigella</taxon>
    </lineage>
</organism>
<proteinExistence type="inferred from homology"/>
<evidence type="ECO:0000255" key="1">
    <source>
        <dbReference type="HAMAP-Rule" id="MF_01519"/>
    </source>
</evidence>
<protein>
    <recommendedName>
        <fullName evidence="1">UPF0325 protein YaeH</fullName>
    </recommendedName>
</protein>
<comment type="similarity">
    <text evidence="1">Belongs to the UPF0325 family.</text>
</comment>
<reference key="1">
    <citation type="journal article" date="2005" name="Nucleic Acids Res.">
        <title>Genome dynamics and diversity of Shigella species, the etiologic agents of bacillary dysentery.</title>
        <authorList>
            <person name="Yang F."/>
            <person name="Yang J."/>
            <person name="Zhang X."/>
            <person name="Chen L."/>
            <person name="Jiang Y."/>
            <person name="Yan Y."/>
            <person name="Tang X."/>
            <person name="Wang J."/>
            <person name="Xiong Z."/>
            <person name="Dong J."/>
            <person name="Xue Y."/>
            <person name="Zhu Y."/>
            <person name="Xu X."/>
            <person name="Sun L."/>
            <person name="Chen S."/>
            <person name="Nie H."/>
            <person name="Peng J."/>
            <person name="Xu J."/>
            <person name="Wang Y."/>
            <person name="Yuan Z."/>
            <person name="Wen Y."/>
            <person name="Yao Z."/>
            <person name="Shen Y."/>
            <person name="Qiang B."/>
            <person name="Hou Y."/>
            <person name="Yu J."/>
            <person name="Jin Q."/>
        </authorList>
    </citation>
    <scope>NUCLEOTIDE SEQUENCE [LARGE SCALE GENOMIC DNA]</scope>
    <source>
        <strain>Sb227</strain>
    </source>
</reference>
<feature type="chain" id="PRO_0000244253" description="UPF0325 protein YaeH">
    <location>
        <begin position="1"/>
        <end position="128"/>
    </location>
</feature>
<dbReference type="EMBL" id="CP000036">
    <property type="protein sequence ID" value="ABB64882.1"/>
    <property type="molecule type" value="Genomic_DNA"/>
</dbReference>
<dbReference type="RefSeq" id="WP_000272188.1">
    <property type="nucleotide sequence ID" value="NC_007613.1"/>
</dbReference>
<dbReference type="SMR" id="Q325X6"/>
<dbReference type="KEGG" id="sbo:SBO_0152"/>
<dbReference type="HOGENOM" id="CLU_136774_0_0_6"/>
<dbReference type="Proteomes" id="UP000007067">
    <property type="component" value="Chromosome"/>
</dbReference>
<dbReference type="HAMAP" id="MF_01519">
    <property type="entry name" value="UPF0325"/>
    <property type="match status" value="1"/>
</dbReference>
<dbReference type="InterPro" id="IPR020911">
    <property type="entry name" value="UPF0325"/>
</dbReference>
<dbReference type="NCBIfam" id="NF010213">
    <property type="entry name" value="PRK13677.1"/>
    <property type="match status" value="1"/>
</dbReference>
<dbReference type="Pfam" id="PF11944">
    <property type="entry name" value="DUF3461"/>
    <property type="match status" value="1"/>
</dbReference>
<gene>
    <name evidence="1" type="primary">yaeH</name>
    <name type="ordered locus">SBO_0152</name>
</gene>
<accession>Q325X6</accession>
<name>YAEH_SHIBS</name>